<gene>
    <name evidence="1" type="primary">rpmC</name>
    <name type="ordered locus">Aave_0346</name>
</gene>
<feature type="chain" id="PRO_1000007408" description="Large ribosomal subunit protein uL29">
    <location>
        <begin position="1"/>
        <end position="65"/>
    </location>
</feature>
<name>RL29_PARC0</name>
<dbReference type="EMBL" id="CP000512">
    <property type="protein sequence ID" value="ABM30953.1"/>
    <property type="molecule type" value="Genomic_DNA"/>
</dbReference>
<dbReference type="RefSeq" id="WP_011793530.1">
    <property type="nucleotide sequence ID" value="NC_008752.1"/>
</dbReference>
<dbReference type="SMR" id="A1TJ15"/>
<dbReference type="STRING" id="397945.Aave_0346"/>
<dbReference type="GeneID" id="79790151"/>
<dbReference type="KEGG" id="aav:Aave_0346"/>
<dbReference type="eggNOG" id="COG0255">
    <property type="taxonomic scope" value="Bacteria"/>
</dbReference>
<dbReference type="HOGENOM" id="CLU_158491_1_1_4"/>
<dbReference type="OrthoDB" id="9815192at2"/>
<dbReference type="Proteomes" id="UP000002596">
    <property type="component" value="Chromosome"/>
</dbReference>
<dbReference type="GO" id="GO:1990904">
    <property type="term" value="C:ribonucleoprotein complex"/>
    <property type="evidence" value="ECO:0007669"/>
    <property type="project" value="UniProtKB-KW"/>
</dbReference>
<dbReference type="GO" id="GO:0005840">
    <property type="term" value="C:ribosome"/>
    <property type="evidence" value="ECO:0007669"/>
    <property type="project" value="UniProtKB-KW"/>
</dbReference>
<dbReference type="GO" id="GO:0003735">
    <property type="term" value="F:structural constituent of ribosome"/>
    <property type="evidence" value="ECO:0007669"/>
    <property type="project" value="InterPro"/>
</dbReference>
<dbReference type="GO" id="GO:0006412">
    <property type="term" value="P:translation"/>
    <property type="evidence" value="ECO:0007669"/>
    <property type="project" value="UniProtKB-UniRule"/>
</dbReference>
<dbReference type="CDD" id="cd00427">
    <property type="entry name" value="Ribosomal_L29_HIP"/>
    <property type="match status" value="1"/>
</dbReference>
<dbReference type="FunFam" id="1.10.287.310:FF:000001">
    <property type="entry name" value="50S ribosomal protein L29"/>
    <property type="match status" value="1"/>
</dbReference>
<dbReference type="Gene3D" id="1.10.287.310">
    <property type="match status" value="1"/>
</dbReference>
<dbReference type="HAMAP" id="MF_00374">
    <property type="entry name" value="Ribosomal_uL29"/>
    <property type="match status" value="1"/>
</dbReference>
<dbReference type="InterPro" id="IPR001854">
    <property type="entry name" value="Ribosomal_uL29"/>
</dbReference>
<dbReference type="InterPro" id="IPR018254">
    <property type="entry name" value="Ribosomal_uL29_CS"/>
</dbReference>
<dbReference type="InterPro" id="IPR036049">
    <property type="entry name" value="Ribosomal_uL29_sf"/>
</dbReference>
<dbReference type="NCBIfam" id="TIGR00012">
    <property type="entry name" value="L29"/>
    <property type="match status" value="1"/>
</dbReference>
<dbReference type="Pfam" id="PF00831">
    <property type="entry name" value="Ribosomal_L29"/>
    <property type="match status" value="1"/>
</dbReference>
<dbReference type="SUPFAM" id="SSF46561">
    <property type="entry name" value="Ribosomal protein L29 (L29p)"/>
    <property type="match status" value="1"/>
</dbReference>
<dbReference type="PROSITE" id="PS00579">
    <property type="entry name" value="RIBOSOMAL_L29"/>
    <property type="match status" value="1"/>
</dbReference>
<accession>A1TJ15</accession>
<proteinExistence type="inferred from homology"/>
<sequence>MTKAAELRQKDVAGLEAEIKSLQKAHFGLRMQKATQQLGNTGTLRTTRRDIARAKTILAEKQAAK</sequence>
<keyword id="KW-0687">Ribonucleoprotein</keyword>
<keyword id="KW-0689">Ribosomal protein</keyword>
<protein>
    <recommendedName>
        <fullName evidence="1">Large ribosomal subunit protein uL29</fullName>
    </recommendedName>
    <alternativeName>
        <fullName evidence="2">50S ribosomal protein L29</fullName>
    </alternativeName>
</protein>
<comment type="similarity">
    <text evidence="1">Belongs to the universal ribosomal protein uL29 family.</text>
</comment>
<organism>
    <name type="scientific">Paracidovorax citrulli (strain AAC00-1)</name>
    <name type="common">Acidovorax citrulli</name>
    <dbReference type="NCBI Taxonomy" id="397945"/>
    <lineage>
        <taxon>Bacteria</taxon>
        <taxon>Pseudomonadati</taxon>
        <taxon>Pseudomonadota</taxon>
        <taxon>Betaproteobacteria</taxon>
        <taxon>Burkholderiales</taxon>
        <taxon>Comamonadaceae</taxon>
        <taxon>Paracidovorax</taxon>
    </lineage>
</organism>
<evidence type="ECO:0000255" key="1">
    <source>
        <dbReference type="HAMAP-Rule" id="MF_00374"/>
    </source>
</evidence>
<evidence type="ECO:0000305" key="2"/>
<reference key="1">
    <citation type="submission" date="2006-12" db="EMBL/GenBank/DDBJ databases">
        <title>Complete sequence of Acidovorax avenae subsp. citrulli AAC00-1.</title>
        <authorList>
            <person name="Copeland A."/>
            <person name="Lucas S."/>
            <person name="Lapidus A."/>
            <person name="Barry K."/>
            <person name="Detter J.C."/>
            <person name="Glavina del Rio T."/>
            <person name="Dalin E."/>
            <person name="Tice H."/>
            <person name="Pitluck S."/>
            <person name="Kiss H."/>
            <person name="Brettin T."/>
            <person name="Bruce D."/>
            <person name="Han C."/>
            <person name="Tapia R."/>
            <person name="Gilna P."/>
            <person name="Schmutz J."/>
            <person name="Larimer F."/>
            <person name="Land M."/>
            <person name="Hauser L."/>
            <person name="Kyrpides N."/>
            <person name="Kim E."/>
            <person name="Stahl D."/>
            <person name="Richardson P."/>
        </authorList>
    </citation>
    <scope>NUCLEOTIDE SEQUENCE [LARGE SCALE GENOMIC DNA]</scope>
    <source>
        <strain>AAC00-1</strain>
    </source>
</reference>